<feature type="chain" id="PRO_0000254392" description="ATP synthase subunit beta">
    <location>
        <begin position="1"/>
        <end position="468"/>
    </location>
</feature>
<feature type="binding site" evidence="1">
    <location>
        <begin position="155"/>
        <end position="162"/>
    </location>
    <ligand>
        <name>ATP</name>
        <dbReference type="ChEBI" id="CHEBI:30616"/>
    </ligand>
</feature>
<accession>Q1JCL3</accession>
<reference key="1">
    <citation type="journal article" date="2006" name="Proc. Natl. Acad. Sci. U.S.A.">
        <title>Molecular genetic anatomy of inter- and intraserotype variation in the human bacterial pathogen group A Streptococcus.</title>
        <authorList>
            <person name="Beres S.B."/>
            <person name="Richter E.W."/>
            <person name="Nagiec M.J."/>
            <person name="Sumby P."/>
            <person name="Porcella S.F."/>
            <person name="DeLeo F.R."/>
            <person name="Musser J.M."/>
        </authorList>
    </citation>
    <scope>NUCLEOTIDE SEQUENCE [LARGE SCALE GENOMIC DNA]</scope>
    <source>
        <strain>MGAS2096</strain>
    </source>
</reference>
<dbReference type="EC" id="7.1.2.2" evidence="1"/>
<dbReference type="EMBL" id="CP000261">
    <property type="protein sequence ID" value="ABF35695.1"/>
    <property type="molecule type" value="Genomic_DNA"/>
</dbReference>
<dbReference type="SMR" id="Q1JCL3"/>
<dbReference type="KEGG" id="spj:MGAS2096_Spy0643"/>
<dbReference type="HOGENOM" id="CLU_022398_0_2_9"/>
<dbReference type="GO" id="GO:0005886">
    <property type="term" value="C:plasma membrane"/>
    <property type="evidence" value="ECO:0007669"/>
    <property type="project" value="UniProtKB-SubCell"/>
</dbReference>
<dbReference type="GO" id="GO:0045259">
    <property type="term" value="C:proton-transporting ATP synthase complex"/>
    <property type="evidence" value="ECO:0007669"/>
    <property type="project" value="UniProtKB-KW"/>
</dbReference>
<dbReference type="GO" id="GO:0005524">
    <property type="term" value="F:ATP binding"/>
    <property type="evidence" value="ECO:0007669"/>
    <property type="project" value="UniProtKB-UniRule"/>
</dbReference>
<dbReference type="GO" id="GO:0016887">
    <property type="term" value="F:ATP hydrolysis activity"/>
    <property type="evidence" value="ECO:0007669"/>
    <property type="project" value="InterPro"/>
</dbReference>
<dbReference type="GO" id="GO:0046933">
    <property type="term" value="F:proton-transporting ATP synthase activity, rotational mechanism"/>
    <property type="evidence" value="ECO:0007669"/>
    <property type="project" value="UniProtKB-UniRule"/>
</dbReference>
<dbReference type="CDD" id="cd18110">
    <property type="entry name" value="ATP-synt_F1_beta_C"/>
    <property type="match status" value="1"/>
</dbReference>
<dbReference type="CDD" id="cd18115">
    <property type="entry name" value="ATP-synt_F1_beta_N"/>
    <property type="match status" value="1"/>
</dbReference>
<dbReference type="CDD" id="cd01133">
    <property type="entry name" value="F1-ATPase_beta_CD"/>
    <property type="match status" value="1"/>
</dbReference>
<dbReference type="FunFam" id="1.10.1140.10:FF:000001">
    <property type="entry name" value="ATP synthase subunit beta"/>
    <property type="match status" value="1"/>
</dbReference>
<dbReference type="FunFam" id="2.40.10.170:FF:000005">
    <property type="entry name" value="ATP synthase subunit beta"/>
    <property type="match status" value="1"/>
</dbReference>
<dbReference type="FunFam" id="3.40.50.300:FF:000004">
    <property type="entry name" value="ATP synthase subunit beta"/>
    <property type="match status" value="1"/>
</dbReference>
<dbReference type="Gene3D" id="2.40.10.170">
    <property type="match status" value="1"/>
</dbReference>
<dbReference type="Gene3D" id="1.10.1140.10">
    <property type="entry name" value="Bovine Mitochondrial F1-atpase, Atp Synthase Beta Chain, Chain D, domain 3"/>
    <property type="match status" value="1"/>
</dbReference>
<dbReference type="Gene3D" id="3.40.50.300">
    <property type="entry name" value="P-loop containing nucleotide triphosphate hydrolases"/>
    <property type="match status" value="1"/>
</dbReference>
<dbReference type="HAMAP" id="MF_01347">
    <property type="entry name" value="ATP_synth_beta_bact"/>
    <property type="match status" value="1"/>
</dbReference>
<dbReference type="InterPro" id="IPR003593">
    <property type="entry name" value="AAA+_ATPase"/>
</dbReference>
<dbReference type="InterPro" id="IPR055190">
    <property type="entry name" value="ATP-synt_VA_C"/>
</dbReference>
<dbReference type="InterPro" id="IPR005722">
    <property type="entry name" value="ATP_synth_F1_bsu"/>
</dbReference>
<dbReference type="InterPro" id="IPR020003">
    <property type="entry name" value="ATPase_a/bsu_AS"/>
</dbReference>
<dbReference type="InterPro" id="IPR050053">
    <property type="entry name" value="ATPase_alpha/beta_chains"/>
</dbReference>
<dbReference type="InterPro" id="IPR004100">
    <property type="entry name" value="ATPase_F1/V1/A1_a/bsu_N"/>
</dbReference>
<dbReference type="InterPro" id="IPR036121">
    <property type="entry name" value="ATPase_F1/V1/A1_a/bsu_N_sf"/>
</dbReference>
<dbReference type="InterPro" id="IPR000194">
    <property type="entry name" value="ATPase_F1/V1/A1_a/bsu_nucl-bd"/>
</dbReference>
<dbReference type="InterPro" id="IPR024034">
    <property type="entry name" value="ATPase_F1/V1_b/a_C"/>
</dbReference>
<dbReference type="InterPro" id="IPR027417">
    <property type="entry name" value="P-loop_NTPase"/>
</dbReference>
<dbReference type="NCBIfam" id="TIGR01039">
    <property type="entry name" value="atpD"/>
    <property type="match status" value="1"/>
</dbReference>
<dbReference type="PANTHER" id="PTHR15184">
    <property type="entry name" value="ATP SYNTHASE"/>
    <property type="match status" value="1"/>
</dbReference>
<dbReference type="PANTHER" id="PTHR15184:SF71">
    <property type="entry name" value="ATP SYNTHASE SUBUNIT BETA, MITOCHONDRIAL"/>
    <property type="match status" value="1"/>
</dbReference>
<dbReference type="Pfam" id="PF00006">
    <property type="entry name" value="ATP-synt_ab"/>
    <property type="match status" value="1"/>
</dbReference>
<dbReference type="Pfam" id="PF02874">
    <property type="entry name" value="ATP-synt_ab_N"/>
    <property type="match status" value="1"/>
</dbReference>
<dbReference type="Pfam" id="PF22919">
    <property type="entry name" value="ATP-synt_VA_C"/>
    <property type="match status" value="1"/>
</dbReference>
<dbReference type="SMART" id="SM00382">
    <property type="entry name" value="AAA"/>
    <property type="match status" value="1"/>
</dbReference>
<dbReference type="SUPFAM" id="SSF47917">
    <property type="entry name" value="C-terminal domain of alpha and beta subunits of F1 ATP synthase"/>
    <property type="match status" value="1"/>
</dbReference>
<dbReference type="SUPFAM" id="SSF50615">
    <property type="entry name" value="N-terminal domain of alpha and beta subunits of F1 ATP synthase"/>
    <property type="match status" value="1"/>
</dbReference>
<dbReference type="SUPFAM" id="SSF52540">
    <property type="entry name" value="P-loop containing nucleoside triphosphate hydrolases"/>
    <property type="match status" value="1"/>
</dbReference>
<dbReference type="PROSITE" id="PS00152">
    <property type="entry name" value="ATPASE_ALPHA_BETA"/>
    <property type="match status" value="1"/>
</dbReference>
<comment type="function">
    <text evidence="1">Produces ATP from ADP in the presence of a proton gradient across the membrane. The catalytic sites are hosted primarily by the beta subunits.</text>
</comment>
<comment type="catalytic activity">
    <reaction evidence="1">
        <text>ATP + H2O + 4 H(+)(in) = ADP + phosphate + 5 H(+)(out)</text>
        <dbReference type="Rhea" id="RHEA:57720"/>
        <dbReference type="ChEBI" id="CHEBI:15377"/>
        <dbReference type="ChEBI" id="CHEBI:15378"/>
        <dbReference type="ChEBI" id="CHEBI:30616"/>
        <dbReference type="ChEBI" id="CHEBI:43474"/>
        <dbReference type="ChEBI" id="CHEBI:456216"/>
        <dbReference type="EC" id="7.1.2.2"/>
    </reaction>
</comment>
<comment type="subunit">
    <text evidence="1">F-type ATPases have 2 components, CF(1) - the catalytic core - and CF(0) - the membrane proton channel. CF(1) has five subunits: alpha(3), beta(3), gamma(1), delta(1), epsilon(1). CF(0) has three main subunits: a(1), b(2) and c(9-12). The alpha and beta chains form an alternating ring which encloses part of the gamma chain. CF(1) is attached to CF(0) by a central stalk formed by the gamma and epsilon chains, while a peripheral stalk is formed by the delta and b chains.</text>
</comment>
<comment type="subcellular location">
    <subcellularLocation>
        <location evidence="1">Cell membrane</location>
        <topology evidence="1">Peripheral membrane protein</topology>
    </subcellularLocation>
</comment>
<comment type="similarity">
    <text evidence="1">Belongs to the ATPase alpha/beta chains family.</text>
</comment>
<keyword id="KW-0066">ATP synthesis</keyword>
<keyword id="KW-0067">ATP-binding</keyword>
<keyword id="KW-1003">Cell membrane</keyword>
<keyword id="KW-0139">CF(1)</keyword>
<keyword id="KW-0375">Hydrogen ion transport</keyword>
<keyword id="KW-0406">Ion transport</keyword>
<keyword id="KW-0472">Membrane</keyword>
<keyword id="KW-0547">Nucleotide-binding</keyword>
<keyword id="KW-1278">Translocase</keyword>
<keyword id="KW-0813">Transport</keyword>
<sequence>MSSGKIAQVVGPVVDVMFASGDKLPEINNALIVYKDSDKKQKIVLEVALELGDGMVRTIAMESTDGLTRGLEVLDTGRAISVPVGKETLGRVFNVLGETIDLEEPFAEDVDRQPIHKKAPSFDELSTSSEILETGIKVIDLLAPYLKGGKVGLFGGAGVGKTVLIQELIHNIAQEHGGISVFTGVGERTREGNDLYWEMKESGVIEKTAMVFGQMNEPPGARMRVALTGLTIAEYFRDVEGQDVLLFIDNIFRFTQAGSEVSALLGRMPSAVGYQPTLATEMGQLQERITSTQKGSVTSIQAIYVPADDYTDPAPATAFAHLDSTTNLERKLTQMGIYPAVDPLASSSRALSPEIVGEEHYAVATEVQRVLQRYRELQDIIAILGMDELSDEEKTLVGRARRIQFFLSQNFNVAEQFTGLPGSYVPVAETVRGFKEILEGKYDDLPEDAFRSVGPIEDVIKKAEKMGF</sequence>
<evidence type="ECO:0000255" key="1">
    <source>
        <dbReference type="HAMAP-Rule" id="MF_01347"/>
    </source>
</evidence>
<gene>
    <name evidence="1" type="primary">atpD</name>
    <name type="ordered locus">MGAS2096_Spy0643</name>
</gene>
<organism>
    <name type="scientific">Streptococcus pyogenes serotype M12 (strain MGAS2096)</name>
    <dbReference type="NCBI Taxonomy" id="370553"/>
    <lineage>
        <taxon>Bacteria</taxon>
        <taxon>Bacillati</taxon>
        <taxon>Bacillota</taxon>
        <taxon>Bacilli</taxon>
        <taxon>Lactobacillales</taxon>
        <taxon>Streptococcaceae</taxon>
        <taxon>Streptococcus</taxon>
    </lineage>
</organism>
<proteinExistence type="inferred from homology"/>
<name>ATPB_STRPB</name>
<protein>
    <recommendedName>
        <fullName evidence="1">ATP synthase subunit beta</fullName>
        <ecNumber evidence="1">7.1.2.2</ecNumber>
    </recommendedName>
    <alternativeName>
        <fullName evidence="1">ATP synthase F1 sector subunit beta</fullName>
    </alternativeName>
    <alternativeName>
        <fullName evidence="1">F-ATPase subunit beta</fullName>
    </alternativeName>
</protein>